<comment type="function">
    <text evidence="1">Translational regulator that ensures constant high levels of translation upon a variety of stress conditions, such as amino acid starvation, UV-C irradiation, proteasome inhibitor treatment and glucose deprivation. Plays a role as a negative regulator of the EIF2AK4/GCN2 kinase activity; impairs GCN1-mediated EIF2AK4/GCN2 activation, and hence EIF2AK4/GCN2-mediated eIF-2-alpha phosphorylation and subsequent down-regulation of protein synthesis. May be required to regulate translation in specific neuronal cells under amino acid starvation conditions by preventing GCN2 activation and therefore ATF4 synthesis. Through its inhibitory action on EIF2AK4/GCN2, plays a role in differentiation of neuronal cells by stimulating neurite outgrowth.</text>
</comment>
<comment type="subunit">
    <text evidence="1">Interacts with GCN1; prevents the interaction of GCN1 with EIF2AK4/GCN2 and inhibits EIF2AK4/GCN2 kinase activity. Interaction with RPL39; this interaction occurs in a GCN1-independent manner. Associates with ribosomes; this interaction occurs in a GCN1-independent manner. Associates with actin; this interaction occurs in a GCN1-independent manner.</text>
</comment>
<comment type="subcellular location">
    <subcellularLocation>
        <location evidence="1">Cytoplasm</location>
    </subcellularLocation>
</comment>
<comment type="miscellaneous">
    <text>The IMPACT locus is imprinted. Paternal inherited gene is expressed, while the maternal inherited gene is silenced.</text>
</comment>
<comment type="similarity">
    <text evidence="5">Belongs to the IMPACT family.</text>
</comment>
<sequence length="317" mass="36094">MAEGDAGSDQRQNEEIEAMAAIYGEEWCVIDDCAKIFCIRISDDIDDPKWTLCLQVMLPNEYPGTAPPIYQLNAPWLKGQERADLSNSLEEIYIQNIGESILYLWVEKIRDVLIEKSQMTEPGPEVKKKTEEVVVECEDDPIVPPQPENSAKAVDVRVREKPREVEEIPPIDHGVPITDRRSTFQAHLAPVVCPEQVKMVLSKLYENKKISSATHNIYAYRIYCEDKQTFLQDSEDDGETAAGGRLLHLMEILNVRNVLVVVSRWYGGILLGPDRFKHINNCARNILVEKNYTSSPEESSKALGKNKKMKNKKRNEH</sequence>
<gene>
    <name type="primary">IMPACT</name>
</gene>
<accession>Q5GFD8</accession>
<feature type="chain" id="PRO_0000330852" description="Protein IMPACT">
    <location>
        <begin position="1"/>
        <end position="317"/>
    </location>
</feature>
<feature type="domain" description="RWD" evidence="3">
    <location>
        <begin position="14"/>
        <end position="116"/>
    </location>
</feature>
<feature type="region of interest" description="Disordered" evidence="4">
    <location>
        <begin position="292"/>
        <end position="317"/>
    </location>
</feature>
<feature type="compositionally biased region" description="Basic residues" evidence="4">
    <location>
        <begin position="304"/>
        <end position="317"/>
    </location>
</feature>
<feature type="modified residue" description="Phosphoserine" evidence="2">
    <location>
        <position position="295"/>
    </location>
</feature>
<dbReference type="EMBL" id="AY574214">
    <property type="protein sequence ID" value="AAS80056.1"/>
    <property type="molecule type" value="mRNA"/>
</dbReference>
<dbReference type="RefSeq" id="NP_001076109.1">
    <property type="nucleotide sequence ID" value="NM_001082640.1"/>
</dbReference>
<dbReference type="SMR" id="Q5GFD8"/>
<dbReference type="FunCoup" id="Q5GFD8">
    <property type="interactions" value="668"/>
</dbReference>
<dbReference type="STRING" id="9986.ENSOCUP00000011956"/>
<dbReference type="PaxDb" id="9986-ENSOCUP00000011956"/>
<dbReference type="GeneID" id="100009333"/>
<dbReference type="KEGG" id="ocu:100009333"/>
<dbReference type="CTD" id="55364"/>
<dbReference type="eggNOG" id="KOG3299">
    <property type="taxonomic scope" value="Eukaryota"/>
</dbReference>
<dbReference type="HOGENOM" id="CLU_045276_1_0_1"/>
<dbReference type="InParanoid" id="Q5GFD8"/>
<dbReference type="OMA" id="FYEISAP"/>
<dbReference type="OrthoDB" id="69641at2759"/>
<dbReference type="TreeFam" id="TF314823"/>
<dbReference type="Proteomes" id="UP000001811">
    <property type="component" value="Unplaced"/>
</dbReference>
<dbReference type="GO" id="GO:0005737">
    <property type="term" value="C:cytoplasm"/>
    <property type="evidence" value="ECO:0000250"/>
    <property type="project" value="UniProtKB"/>
</dbReference>
<dbReference type="GO" id="GO:0003779">
    <property type="term" value="F:actin binding"/>
    <property type="evidence" value="ECO:0007669"/>
    <property type="project" value="UniProtKB-KW"/>
</dbReference>
<dbReference type="GO" id="GO:0140311">
    <property type="term" value="F:protein sequestering activity"/>
    <property type="evidence" value="ECO:0000250"/>
    <property type="project" value="UniProtKB"/>
</dbReference>
<dbReference type="GO" id="GO:0034198">
    <property type="term" value="P:cellular response to amino acid starvation"/>
    <property type="evidence" value="ECO:0000250"/>
    <property type="project" value="UniProtKB"/>
</dbReference>
<dbReference type="GO" id="GO:0140469">
    <property type="term" value="P:GCN2-mediated signaling"/>
    <property type="evidence" value="ECO:0000250"/>
    <property type="project" value="UniProtKB"/>
</dbReference>
<dbReference type="GO" id="GO:0035556">
    <property type="term" value="P:intracellular signal transduction"/>
    <property type="evidence" value="ECO:0000250"/>
    <property type="project" value="UniProtKB"/>
</dbReference>
<dbReference type="GO" id="GO:0000122">
    <property type="term" value="P:negative regulation of transcription by RNA polymerase II"/>
    <property type="evidence" value="ECO:0000250"/>
    <property type="project" value="UniProtKB"/>
</dbReference>
<dbReference type="GO" id="GO:1990138">
    <property type="term" value="P:neuron projection extension"/>
    <property type="evidence" value="ECO:0000250"/>
    <property type="project" value="UniProtKB"/>
</dbReference>
<dbReference type="GO" id="GO:0045666">
    <property type="term" value="P:positive regulation of neuron differentiation"/>
    <property type="evidence" value="ECO:0000250"/>
    <property type="project" value="UniProtKB"/>
</dbReference>
<dbReference type="GO" id="GO:1990611">
    <property type="term" value="P:regulation of cytoplasmic translational initiation in response to stress"/>
    <property type="evidence" value="ECO:0000250"/>
    <property type="project" value="UniProtKB"/>
</dbReference>
<dbReference type="CDD" id="cd23821">
    <property type="entry name" value="RWD_IMPACT"/>
    <property type="match status" value="1"/>
</dbReference>
<dbReference type="FunFam" id="3.10.110.10:FF:000066">
    <property type="entry name" value="IMPACT isoform 1"/>
    <property type="match status" value="1"/>
</dbReference>
<dbReference type="FunFam" id="3.30.230.30:FF:000001">
    <property type="entry name" value="IMPACT isoform 1"/>
    <property type="match status" value="1"/>
</dbReference>
<dbReference type="Gene3D" id="3.30.230.30">
    <property type="entry name" value="Impact, N-terminal domain"/>
    <property type="match status" value="1"/>
</dbReference>
<dbReference type="Gene3D" id="3.10.110.10">
    <property type="entry name" value="Ubiquitin Conjugating Enzyme"/>
    <property type="match status" value="1"/>
</dbReference>
<dbReference type="InterPro" id="IPR023582">
    <property type="entry name" value="Impact"/>
</dbReference>
<dbReference type="InterPro" id="IPR001498">
    <property type="entry name" value="Impact_N"/>
</dbReference>
<dbReference type="InterPro" id="IPR036956">
    <property type="entry name" value="Impact_N_sf"/>
</dbReference>
<dbReference type="InterPro" id="IPR020568">
    <property type="entry name" value="Ribosomal_Su5_D2-typ_SF"/>
</dbReference>
<dbReference type="InterPro" id="IPR006575">
    <property type="entry name" value="RWD_dom"/>
</dbReference>
<dbReference type="InterPro" id="IPR016135">
    <property type="entry name" value="UBQ-conjugating_enzyme/RWD"/>
</dbReference>
<dbReference type="InterPro" id="IPR020569">
    <property type="entry name" value="UPF0029_Impact_CS"/>
</dbReference>
<dbReference type="PANTHER" id="PTHR16301">
    <property type="entry name" value="IMPACT-RELATED"/>
    <property type="match status" value="1"/>
</dbReference>
<dbReference type="PANTHER" id="PTHR16301:SF25">
    <property type="entry name" value="PROTEIN IMPACT"/>
    <property type="match status" value="1"/>
</dbReference>
<dbReference type="Pfam" id="PF05773">
    <property type="entry name" value="RWD"/>
    <property type="match status" value="1"/>
</dbReference>
<dbReference type="Pfam" id="PF01205">
    <property type="entry name" value="UPF0029"/>
    <property type="match status" value="1"/>
</dbReference>
<dbReference type="SMART" id="SM00591">
    <property type="entry name" value="RWD"/>
    <property type="match status" value="1"/>
</dbReference>
<dbReference type="SUPFAM" id="SSF54211">
    <property type="entry name" value="Ribosomal protein S5 domain 2-like"/>
    <property type="match status" value="1"/>
</dbReference>
<dbReference type="SUPFAM" id="SSF54495">
    <property type="entry name" value="UBC-like"/>
    <property type="match status" value="1"/>
</dbReference>
<dbReference type="PROSITE" id="PS50908">
    <property type="entry name" value="RWD"/>
    <property type="match status" value="1"/>
</dbReference>
<dbReference type="PROSITE" id="PS00910">
    <property type="entry name" value="UPF0029"/>
    <property type="match status" value="1"/>
</dbReference>
<evidence type="ECO:0000250" key="1">
    <source>
        <dbReference type="UniProtKB" id="O55091"/>
    </source>
</evidence>
<evidence type="ECO:0000250" key="2">
    <source>
        <dbReference type="UniProtKB" id="Q5GFD9"/>
    </source>
</evidence>
<evidence type="ECO:0000255" key="3">
    <source>
        <dbReference type="PROSITE-ProRule" id="PRU00179"/>
    </source>
</evidence>
<evidence type="ECO:0000256" key="4">
    <source>
        <dbReference type="SAM" id="MobiDB-lite"/>
    </source>
</evidence>
<evidence type="ECO:0000305" key="5"/>
<proteinExistence type="evidence at transcript level"/>
<reference key="1">
    <citation type="journal article" date="2005" name="Biochem. Biophys. Res. Commun.">
        <title>Comparative genomics approach toward critical determinants for the imprinting of an evolutionarily conserved gene Impact.</title>
        <authorList>
            <person name="Okamura K."/>
            <person name="Sakaki Y."/>
            <person name="Ito T."/>
        </authorList>
    </citation>
    <scope>NUCLEOTIDE SEQUENCE [MRNA]</scope>
    <scope>IMPRINTING</scope>
    <source>
        <strain>New Zealand</strain>
        <tissue>Spleen</tissue>
    </source>
</reference>
<keyword id="KW-0009">Actin-binding</keyword>
<keyword id="KW-0963">Cytoplasm</keyword>
<keyword id="KW-0221">Differentiation</keyword>
<keyword id="KW-0524">Neurogenesis</keyword>
<keyword id="KW-0597">Phosphoprotein</keyword>
<keyword id="KW-1185">Reference proteome</keyword>
<keyword id="KW-0678">Repressor</keyword>
<keyword id="KW-0346">Stress response</keyword>
<keyword id="KW-0810">Translation regulation</keyword>
<organism>
    <name type="scientific">Oryctolagus cuniculus</name>
    <name type="common">Rabbit</name>
    <dbReference type="NCBI Taxonomy" id="9986"/>
    <lineage>
        <taxon>Eukaryota</taxon>
        <taxon>Metazoa</taxon>
        <taxon>Chordata</taxon>
        <taxon>Craniata</taxon>
        <taxon>Vertebrata</taxon>
        <taxon>Euteleostomi</taxon>
        <taxon>Mammalia</taxon>
        <taxon>Eutheria</taxon>
        <taxon>Euarchontoglires</taxon>
        <taxon>Glires</taxon>
        <taxon>Lagomorpha</taxon>
        <taxon>Leporidae</taxon>
        <taxon>Oryctolagus</taxon>
    </lineage>
</organism>
<name>IMPCT_RABIT</name>
<protein>
    <recommendedName>
        <fullName>Protein IMPACT</fullName>
    </recommendedName>
    <alternativeName>
        <fullName>Imprinted and ancient gene protein homolog</fullName>
    </alternativeName>
</protein>